<sequence>MHLRPSPQSPQSACCNPELPATEPPTPAEHPTAFRRSQAPSRTPRTFSRETLHILRENRCLAVSKVVHTPDIPPKTPASQAASNRAHRTAKHPARRQSCKLKAPNPCVGHPLRIPSPKHSPRHCTLHDIRHRKKLHPLNNPKGANKRKTPPLIQPTVLEPLPHPVLSPHNISSSTDHPDPSPAIKPSPPNNTRHILLTTKSLLLILTHPIISAYPFHPYFSFTPHEHHIRSRDTQN</sequence>
<keyword id="KW-1185">Reference proteome</keyword>
<gene>
    <name type="ordered locus">ECU07_0030</name>
</gene>
<gene>
    <name type="ordered locus">ECU09_2040</name>
</gene>
<evidence type="ECO:0000256" key="1">
    <source>
        <dbReference type="SAM" id="MobiDB-lite"/>
    </source>
</evidence>
<reference key="1">
    <citation type="journal article" date="2001" name="Nature">
        <title>Genome sequence and gene compaction of the eukaryote parasite Encephalitozoon cuniculi.</title>
        <authorList>
            <person name="Katinka M.D."/>
            <person name="Duprat S."/>
            <person name="Cornillot E."/>
            <person name="Metenier G."/>
            <person name="Thomarat F."/>
            <person name="Prensier G."/>
            <person name="Barbe V."/>
            <person name="Peyretaillade E."/>
            <person name="Brottier P."/>
            <person name="Wincker P."/>
            <person name="Delbac F."/>
            <person name="El Alaoui H."/>
            <person name="Peyret P."/>
            <person name="Saurin W."/>
            <person name="Gouy M."/>
            <person name="Weissenbach J."/>
            <person name="Vivares C.P."/>
        </authorList>
    </citation>
    <scope>NUCLEOTIDE SEQUENCE [LARGE SCALE GENOMIC DNA]</scope>
    <source>
        <strain>GB-M1</strain>
    </source>
</reference>
<name>Y703_ENCCU</name>
<accession>Q8ST93</accession>
<proteinExistence type="predicted"/>
<protein>
    <recommendedName>
        <fullName>Uncharacterized protein ECU07_0030/ECU09_2040</fullName>
    </recommendedName>
</protein>
<feature type="chain" id="PRO_0000223091" description="Uncharacterized protein ECU07_0030/ECU09_2040">
    <location>
        <begin position="1"/>
        <end position="236"/>
    </location>
</feature>
<feature type="region of interest" description="Disordered" evidence="1">
    <location>
        <begin position="1"/>
        <end position="48"/>
    </location>
</feature>
<feature type="region of interest" description="Disordered" evidence="1">
    <location>
        <begin position="67"/>
        <end position="122"/>
    </location>
</feature>
<feature type="region of interest" description="Disordered" evidence="1">
    <location>
        <begin position="134"/>
        <end position="192"/>
    </location>
</feature>
<feature type="compositionally biased region" description="Basic residues" evidence="1">
    <location>
        <begin position="85"/>
        <end position="99"/>
    </location>
</feature>
<feature type="compositionally biased region" description="Pro residues" evidence="1">
    <location>
        <begin position="180"/>
        <end position="189"/>
    </location>
</feature>
<organism>
    <name type="scientific">Encephalitozoon cuniculi (strain GB-M1)</name>
    <name type="common">Microsporidian parasite</name>
    <dbReference type="NCBI Taxonomy" id="284813"/>
    <lineage>
        <taxon>Eukaryota</taxon>
        <taxon>Fungi</taxon>
        <taxon>Fungi incertae sedis</taxon>
        <taxon>Microsporidia</taxon>
        <taxon>Unikaryonidae</taxon>
        <taxon>Encephalitozoon</taxon>
    </lineage>
</organism>
<dbReference type="EMBL" id="AL590447">
    <property type="protein sequence ID" value="CAD25535.1"/>
    <property type="molecule type" value="Genomic_DNA"/>
</dbReference>
<dbReference type="EMBL" id="AL590451">
    <property type="protein sequence ID" value="CAD27177.1"/>
    <property type="molecule type" value="Genomic_DNA"/>
</dbReference>
<dbReference type="RefSeq" id="NP_585931.1">
    <property type="nucleotide sequence ID" value="NM_001041553.1"/>
</dbReference>
<dbReference type="RefSeq" id="XP_955758.1">
    <property type="nucleotide sequence ID" value="XM_950665.1"/>
</dbReference>
<dbReference type="GeneID" id="859359"/>
<dbReference type="KEGG" id="ecu:ECU07_0030"/>
<dbReference type="VEuPathDB" id="MicrosporidiaDB:ECU07_0030"/>
<dbReference type="VEuPathDB" id="MicrosporidiaDB:ECU09_2040"/>
<dbReference type="HOGENOM" id="CLU_1175418_0_0_1"/>
<dbReference type="InParanoid" id="Q8ST93"/>
<dbReference type="OrthoDB" id="5622783at2759"/>
<dbReference type="Proteomes" id="UP000000819">
    <property type="component" value="Chromosome IX"/>
</dbReference>
<dbReference type="Proteomes" id="UP000000819">
    <property type="component" value="Chromosome VII"/>
</dbReference>